<proteinExistence type="inferred from homology"/>
<sequence length="255" mass="29094">MAVISMKQLLEAGVHFGHQTRRWNPKMKKYIFTERNGIYIIDLQKTVKKVDEAYNFLKQVSEDGGQVLFVGTKKQAQESVKSEAERAGQFYINQRWLGGLLTNYKTISKRIKRISEIEKMEEDGLFEVLPKKEVVELKKEYDRLIKFLGGIRDMKSMPQALFVVDPRKERNAIAEARKLNIPIVGIVDTNCDPDEIDYVIPANDDAIRAVKLLTAKMADAILEGQQGVSNEEVAAEQNIDLDEKEKSEETEATEE</sequence>
<name>RS2_STAAM</name>
<dbReference type="EMBL" id="BA000017">
    <property type="protein sequence ID" value="BAB57418.1"/>
    <property type="molecule type" value="Genomic_DNA"/>
</dbReference>
<dbReference type="RefSeq" id="WP_000268484.1">
    <property type="nucleotide sequence ID" value="NC_002758.2"/>
</dbReference>
<dbReference type="SMR" id="P66543"/>
<dbReference type="GeneID" id="98345571"/>
<dbReference type="KEGG" id="sav:SAV1256"/>
<dbReference type="HOGENOM" id="CLU_040318_1_2_9"/>
<dbReference type="PhylomeDB" id="P66543"/>
<dbReference type="Proteomes" id="UP000002481">
    <property type="component" value="Chromosome"/>
</dbReference>
<dbReference type="GO" id="GO:0022627">
    <property type="term" value="C:cytosolic small ribosomal subunit"/>
    <property type="evidence" value="ECO:0007669"/>
    <property type="project" value="TreeGrafter"/>
</dbReference>
<dbReference type="GO" id="GO:0003735">
    <property type="term" value="F:structural constituent of ribosome"/>
    <property type="evidence" value="ECO:0007669"/>
    <property type="project" value="InterPro"/>
</dbReference>
<dbReference type="GO" id="GO:0006412">
    <property type="term" value="P:translation"/>
    <property type="evidence" value="ECO:0007669"/>
    <property type="project" value="UniProtKB-UniRule"/>
</dbReference>
<dbReference type="CDD" id="cd01425">
    <property type="entry name" value="RPS2"/>
    <property type="match status" value="1"/>
</dbReference>
<dbReference type="FunFam" id="1.10.287.610:FF:000001">
    <property type="entry name" value="30S ribosomal protein S2"/>
    <property type="match status" value="1"/>
</dbReference>
<dbReference type="Gene3D" id="3.40.50.10490">
    <property type="entry name" value="Glucose-6-phosphate isomerase like protein, domain 1"/>
    <property type="match status" value="1"/>
</dbReference>
<dbReference type="Gene3D" id="1.10.287.610">
    <property type="entry name" value="Helix hairpin bin"/>
    <property type="match status" value="1"/>
</dbReference>
<dbReference type="HAMAP" id="MF_00291_B">
    <property type="entry name" value="Ribosomal_uS2_B"/>
    <property type="match status" value="1"/>
</dbReference>
<dbReference type="InterPro" id="IPR001865">
    <property type="entry name" value="Ribosomal_uS2"/>
</dbReference>
<dbReference type="InterPro" id="IPR005706">
    <property type="entry name" value="Ribosomal_uS2_bac/mit/plastid"/>
</dbReference>
<dbReference type="InterPro" id="IPR018130">
    <property type="entry name" value="Ribosomal_uS2_CS"/>
</dbReference>
<dbReference type="InterPro" id="IPR023591">
    <property type="entry name" value="Ribosomal_uS2_flav_dom_sf"/>
</dbReference>
<dbReference type="NCBIfam" id="TIGR01011">
    <property type="entry name" value="rpsB_bact"/>
    <property type="match status" value="1"/>
</dbReference>
<dbReference type="PANTHER" id="PTHR12534">
    <property type="entry name" value="30S RIBOSOMAL PROTEIN S2 PROKARYOTIC AND ORGANELLAR"/>
    <property type="match status" value="1"/>
</dbReference>
<dbReference type="PANTHER" id="PTHR12534:SF0">
    <property type="entry name" value="SMALL RIBOSOMAL SUBUNIT PROTEIN US2M"/>
    <property type="match status" value="1"/>
</dbReference>
<dbReference type="Pfam" id="PF00318">
    <property type="entry name" value="Ribosomal_S2"/>
    <property type="match status" value="1"/>
</dbReference>
<dbReference type="PRINTS" id="PR00395">
    <property type="entry name" value="RIBOSOMALS2"/>
</dbReference>
<dbReference type="SUPFAM" id="SSF52313">
    <property type="entry name" value="Ribosomal protein S2"/>
    <property type="match status" value="1"/>
</dbReference>
<dbReference type="PROSITE" id="PS00962">
    <property type="entry name" value="RIBOSOMAL_S2_1"/>
    <property type="match status" value="1"/>
</dbReference>
<dbReference type="PROSITE" id="PS00963">
    <property type="entry name" value="RIBOSOMAL_S2_2"/>
    <property type="match status" value="1"/>
</dbReference>
<reference key="1">
    <citation type="journal article" date="2001" name="Lancet">
        <title>Whole genome sequencing of meticillin-resistant Staphylococcus aureus.</title>
        <authorList>
            <person name="Kuroda M."/>
            <person name="Ohta T."/>
            <person name="Uchiyama I."/>
            <person name="Baba T."/>
            <person name="Yuzawa H."/>
            <person name="Kobayashi I."/>
            <person name="Cui L."/>
            <person name="Oguchi A."/>
            <person name="Aoki K."/>
            <person name="Nagai Y."/>
            <person name="Lian J.-Q."/>
            <person name="Ito T."/>
            <person name="Kanamori M."/>
            <person name="Matsumaru H."/>
            <person name="Maruyama A."/>
            <person name="Murakami H."/>
            <person name="Hosoyama A."/>
            <person name="Mizutani-Ui Y."/>
            <person name="Takahashi N.K."/>
            <person name="Sawano T."/>
            <person name="Inoue R."/>
            <person name="Kaito C."/>
            <person name="Sekimizu K."/>
            <person name="Hirakawa H."/>
            <person name="Kuhara S."/>
            <person name="Goto S."/>
            <person name="Yabuzaki J."/>
            <person name="Kanehisa M."/>
            <person name="Yamashita A."/>
            <person name="Oshima K."/>
            <person name="Furuya K."/>
            <person name="Yoshino C."/>
            <person name="Shiba T."/>
            <person name="Hattori M."/>
            <person name="Ogasawara N."/>
            <person name="Hayashi H."/>
            <person name="Hiramatsu K."/>
        </authorList>
    </citation>
    <scope>NUCLEOTIDE SEQUENCE [LARGE SCALE GENOMIC DNA]</scope>
    <source>
        <strain>Mu50 / ATCC 700699</strain>
    </source>
</reference>
<organism>
    <name type="scientific">Staphylococcus aureus (strain Mu50 / ATCC 700699)</name>
    <dbReference type="NCBI Taxonomy" id="158878"/>
    <lineage>
        <taxon>Bacteria</taxon>
        <taxon>Bacillati</taxon>
        <taxon>Bacillota</taxon>
        <taxon>Bacilli</taxon>
        <taxon>Bacillales</taxon>
        <taxon>Staphylococcaceae</taxon>
        <taxon>Staphylococcus</taxon>
    </lineage>
</organism>
<gene>
    <name evidence="1" type="primary">rpsB</name>
    <name type="ordered locus">SAV1256</name>
</gene>
<keyword id="KW-0687">Ribonucleoprotein</keyword>
<keyword id="KW-0689">Ribosomal protein</keyword>
<comment type="similarity">
    <text evidence="1">Belongs to the universal ribosomal protein uS2 family.</text>
</comment>
<accession>P66543</accession>
<accession>Q99UL5</accession>
<feature type="chain" id="PRO_0000134239" description="Small ribosomal subunit protein uS2">
    <location>
        <begin position="1"/>
        <end position="255"/>
    </location>
</feature>
<feature type="region of interest" description="Disordered" evidence="2">
    <location>
        <begin position="226"/>
        <end position="255"/>
    </location>
</feature>
<protein>
    <recommendedName>
        <fullName evidence="1">Small ribosomal subunit protein uS2</fullName>
    </recommendedName>
    <alternativeName>
        <fullName evidence="3">30S ribosomal protein S2</fullName>
    </alternativeName>
</protein>
<evidence type="ECO:0000255" key="1">
    <source>
        <dbReference type="HAMAP-Rule" id="MF_00291"/>
    </source>
</evidence>
<evidence type="ECO:0000256" key="2">
    <source>
        <dbReference type="SAM" id="MobiDB-lite"/>
    </source>
</evidence>
<evidence type="ECO:0000305" key="3"/>